<name>TRIB3_MOUSE</name>
<sequence>MRATPLAASADVSCRKKPLEFDDNIDAKCPVLKRVRDEPEPGPLPSLLPPSPPPASDLSPAVAPATRLGPYILLEREQGSCSYRALHCPTGTEYTCKVYPASEAQAVLAPYARLPTHQHVARPTEVLLGSRLLYIFFTKTHGDLHSLVRSRRGIPESEAAGLFRQMASAVAHCHKHGLVLRDLKLRRFVFSNCERTKLVLENLEDACVMTGSDDSLWDKHACPAYVGPEILSSRPSYSGKAADVWSLGVALFTMLAGRYPFHDSEPVLLFGKIRRGTFALPEGLSAPARCLIRCLLRKEPSERLVALGILLHPWLREDHGRVSPPQSDRREMDQVVPDGPQLEEAEEGEVGLYG</sequence>
<comment type="function">
    <text evidence="2 5 6 7 8">Inactive protein kinase which acts as a regulator of the integrated stress response (ISR), a process for adaptation to various stress (PubMed:17369260). Inhibits the transcriptional activity of DDIT3/CHOP and is involved in DDIT3/CHOP-dependent cell death during ER stress (By similarity). May play a role in programmed neuronal cell death but does not appear to affect non-neuronal cells (By similarity). Acts as a negative feedback regulator of the ATF4-dependent transcription during the ISR: while TRIB3 expression is promoted by ATF4, TRIB3 protein interacts with ATF4 and inhibits ATF4 transcription activity (PubMed:12749859, PubMed:17369260). Disrupts insulin signaling by binding directly to Akt kinases and blocking their activation (PubMed:12791994). May bind directly to and mask the 'Thr-308' phosphorylation site in AKT1 (PubMed:12791994). Interacts with the NF-kappa-B transactivator p65 RELA and inhibits its phosphorylation and thus its transcriptional activation activity (By similarity). Interacts with MAPK kinases and regulates activation of MAP kinases (By similarity). Can inhibit APOBEC3A editing of nuclear DNA (PubMed:22977230).</text>
</comment>
<comment type="subunit">
    <text evidence="2 5 6 7 8">Interacts with AKT1, AKT2, MAP2K1 and MAP2K7 (PubMed:12791994). Interacts with ATF4 (PubMed:12749859, PubMed:17369260). Interacts with DDIT3/CHOP and inhibits its interaction with EP300/P300 (By similarity). Interacts with APOBEC3C (By similarity). Interacts (via N-terminus) with APOBEC3A (PubMed:22977230). Interacts with RELA (By similarity).</text>
</comment>
<comment type="interaction">
    <interactant intactId="EBI-448962">
        <id>Q8K4K2</id>
    </interactant>
    <interactant intactId="EBI-298707">
        <id>P31750</id>
        <label>Akt1</label>
    </interactant>
    <organismsDiffer>false</organismsDiffer>
    <experiments>5</experiments>
</comment>
<comment type="interaction">
    <interactant intactId="EBI-448962">
        <id>Q8K4K2</id>
    </interactant>
    <interactant intactId="EBI-77383">
        <id>Q06507</id>
        <label>Atf4</label>
    </interactant>
    <organismsDiffer>false</organismsDiffer>
    <experiments>3</experiments>
</comment>
<comment type="subcellular location">
    <subcellularLocation>
        <location evidence="5 8">Nucleus</location>
    </subcellularLocation>
</comment>
<comment type="tissue specificity">
    <text evidence="5">Highly expressed in liver. Not detected in heart, brain, spleen, lung, skeletal muscle, kidney or testis.</text>
</comment>
<comment type="induction">
    <text evidence="5 6 7">In liver under fasting conditions and by thapsigargin (PubMed:12749859, PubMed:12791994). Expression is activated by ATF4 in response to stress (PubMed:17369260).</text>
</comment>
<comment type="domain">
    <text>The protein kinase domain is predicted to be catalytically inactive.</text>
</comment>
<comment type="similarity">
    <text evidence="9">Belongs to the protein kinase superfamily. CAMK Ser/Thr protein kinase family. Tribbles subfamily.</text>
</comment>
<comment type="caution">
    <text evidence="9">The role of this protein in Akt activation has been demonstrated in PubMed:12749859 but Iynedjian has not been able to reproduce the result in rat hepatocytes.</text>
</comment>
<reference key="1">
    <citation type="journal article" date="2003" name="Exp. Cell Res.">
        <title>Mouse NIPK interacts with ATF4 and affects its transcriptional activity.</title>
        <authorList>
            <person name="Ord D."/>
            <person name="Ord T."/>
        </authorList>
    </citation>
    <scope>NUCLEOTIDE SEQUENCE [MRNA]</scope>
    <scope>FUNCTION</scope>
    <scope>SUBCELLULAR LOCATION</scope>
    <scope>TISSUE SPECIFICITY</scope>
    <scope>INDUCTION</scope>
    <scope>INTERACTION WITH ATF4</scope>
</reference>
<reference key="2">
    <citation type="journal article" date="2003" name="Science">
        <title>TRB3: a tribbles homolog that inhibits Akt/PKB activation by insulin in liver.</title>
        <authorList>
            <person name="Du K."/>
            <person name="Herzig S."/>
            <person name="Kulkarni R.N."/>
            <person name="Montminy M."/>
        </authorList>
    </citation>
    <scope>NUCLEOTIDE SEQUENCE [MRNA]</scope>
    <scope>FUNCTION</scope>
    <scope>INDUCTION</scope>
    <scope>INTERACTION WITH AKT1 AND AKT2</scope>
</reference>
<reference key="3">
    <citation type="submission" date="2001-03" db="EMBL/GenBank/DDBJ databases">
        <title>Mammalian homologs of Drosophila tribbles (htrb) control mitogen activated protein kinase signaling.</title>
        <authorList>
            <person name="Kiss-Toth E."/>
            <person name="Dempsey C."/>
            <person name="Jozsa V."/>
            <person name="Caunt J."/>
            <person name="Oxley K.M."/>
            <person name="Bagstaff S.M."/>
            <person name="Wyllie D.H."/>
            <person name="Harte M."/>
            <person name="O'Neill L.A.J."/>
            <person name="Qwarnstrom E.E."/>
            <person name="Dower S.K."/>
        </authorList>
    </citation>
    <scope>NUCLEOTIDE SEQUENCE [MRNA]</scope>
</reference>
<reference key="4">
    <citation type="journal article" date="2005" name="Science">
        <title>The transcriptional landscape of the mammalian genome.</title>
        <authorList>
            <person name="Carninci P."/>
            <person name="Kasukawa T."/>
            <person name="Katayama S."/>
            <person name="Gough J."/>
            <person name="Frith M.C."/>
            <person name="Maeda N."/>
            <person name="Oyama R."/>
            <person name="Ravasi T."/>
            <person name="Lenhard B."/>
            <person name="Wells C."/>
            <person name="Kodzius R."/>
            <person name="Shimokawa K."/>
            <person name="Bajic V.B."/>
            <person name="Brenner S.E."/>
            <person name="Batalov S."/>
            <person name="Forrest A.R."/>
            <person name="Zavolan M."/>
            <person name="Davis M.J."/>
            <person name="Wilming L.G."/>
            <person name="Aidinis V."/>
            <person name="Allen J.E."/>
            <person name="Ambesi-Impiombato A."/>
            <person name="Apweiler R."/>
            <person name="Aturaliya R.N."/>
            <person name="Bailey T.L."/>
            <person name="Bansal M."/>
            <person name="Baxter L."/>
            <person name="Beisel K.W."/>
            <person name="Bersano T."/>
            <person name="Bono H."/>
            <person name="Chalk A.M."/>
            <person name="Chiu K.P."/>
            <person name="Choudhary V."/>
            <person name="Christoffels A."/>
            <person name="Clutterbuck D.R."/>
            <person name="Crowe M.L."/>
            <person name="Dalla E."/>
            <person name="Dalrymple B.P."/>
            <person name="de Bono B."/>
            <person name="Della Gatta G."/>
            <person name="di Bernardo D."/>
            <person name="Down T."/>
            <person name="Engstrom P."/>
            <person name="Fagiolini M."/>
            <person name="Faulkner G."/>
            <person name="Fletcher C.F."/>
            <person name="Fukushima T."/>
            <person name="Furuno M."/>
            <person name="Futaki S."/>
            <person name="Gariboldi M."/>
            <person name="Georgii-Hemming P."/>
            <person name="Gingeras T.R."/>
            <person name="Gojobori T."/>
            <person name="Green R.E."/>
            <person name="Gustincich S."/>
            <person name="Harbers M."/>
            <person name="Hayashi Y."/>
            <person name="Hensch T.K."/>
            <person name="Hirokawa N."/>
            <person name="Hill D."/>
            <person name="Huminiecki L."/>
            <person name="Iacono M."/>
            <person name="Ikeo K."/>
            <person name="Iwama A."/>
            <person name="Ishikawa T."/>
            <person name="Jakt M."/>
            <person name="Kanapin A."/>
            <person name="Katoh M."/>
            <person name="Kawasawa Y."/>
            <person name="Kelso J."/>
            <person name="Kitamura H."/>
            <person name="Kitano H."/>
            <person name="Kollias G."/>
            <person name="Krishnan S.P."/>
            <person name="Kruger A."/>
            <person name="Kummerfeld S.K."/>
            <person name="Kurochkin I.V."/>
            <person name="Lareau L.F."/>
            <person name="Lazarevic D."/>
            <person name="Lipovich L."/>
            <person name="Liu J."/>
            <person name="Liuni S."/>
            <person name="McWilliam S."/>
            <person name="Madan Babu M."/>
            <person name="Madera M."/>
            <person name="Marchionni L."/>
            <person name="Matsuda H."/>
            <person name="Matsuzawa S."/>
            <person name="Miki H."/>
            <person name="Mignone F."/>
            <person name="Miyake S."/>
            <person name="Morris K."/>
            <person name="Mottagui-Tabar S."/>
            <person name="Mulder N."/>
            <person name="Nakano N."/>
            <person name="Nakauchi H."/>
            <person name="Ng P."/>
            <person name="Nilsson R."/>
            <person name="Nishiguchi S."/>
            <person name="Nishikawa S."/>
            <person name="Nori F."/>
            <person name="Ohara O."/>
            <person name="Okazaki Y."/>
            <person name="Orlando V."/>
            <person name="Pang K.C."/>
            <person name="Pavan W.J."/>
            <person name="Pavesi G."/>
            <person name="Pesole G."/>
            <person name="Petrovsky N."/>
            <person name="Piazza S."/>
            <person name="Reed J."/>
            <person name="Reid J.F."/>
            <person name="Ring B.Z."/>
            <person name="Ringwald M."/>
            <person name="Rost B."/>
            <person name="Ruan Y."/>
            <person name="Salzberg S.L."/>
            <person name="Sandelin A."/>
            <person name="Schneider C."/>
            <person name="Schoenbach C."/>
            <person name="Sekiguchi K."/>
            <person name="Semple C.A."/>
            <person name="Seno S."/>
            <person name="Sessa L."/>
            <person name="Sheng Y."/>
            <person name="Shibata Y."/>
            <person name="Shimada H."/>
            <person name="Shimada K."/>
            <person name="Silva D."/>
            <person name="Sinclair B."/>
            <person name="Sperling S."/>
            <person name="Stupka E."/>
            <person name="Sugiura K."/>
            <person name="Sultana R."/>
            <person name="Takenaka Y."/>
            <person name="Taki K."/>
            <person name="Tammoja K."/>
            <person name="Tan S.L."/>
            <person name="Tang S."/>
            <person name="Taylor M.S."/>
            <person name="Tegner J."/>
            <person name="Teichmann S.A."/>
            <person name="Ueda H.R."/>
            <person name="van Nimwegen E."/>
            <person name="Verardo R."/>
            <person name="Wei C.L."/>
            <person name="Yagi K."/>
            <person name="Yamanishi H."/>
            <person name="Zabarovsky E."/>
            <person name="Zhu S."/>
            <person name="Zimmer A."/>
            <person name="Hide W."/>
            <person name="Bult C."/>
            <person name="Grimmond S.M."/>
            <person name="Teasdale R.D."/>
            <person name="Liu E.T."/>
            <person name="Brusic V."/>
            <person name="Quackenbush J."/>
            <person name="Wahlestedt C."/>
            <person name="Mattick J.S."/>
            <person name="Hume D.A."/>
            <person name="Kai C."/>
            <person name="Sasaki D."/>
            <person name="Tomaru Y."/>
            <person name="Fukuda S."/>
            <person name="Kanamori-Katayama M."/>
            <person name="Suzuki M."/>
            <person name="Aoki J."/>
            <person name="Arakawa T."/>
            <person name="Iida J."/>
            <person name="Imamura K."/>
            <person name="Itoh M."/>
            <person name="Kato T."/>
            <person name="Kawaji H."/>
            <person name="Kawagashira N."/>
            <person name="Kawashima T."/>
            <person name="Kojima M."/>
            <person name="Kondo S."/>
            <person name="Konno H."/>
            <person name="Nakano K."/>
            <person name="Ninomiya N."/>
            <person name="Nishio T."/>
            <person name="Okada M."/>
            <person name="Plessy C."/>
            <person name="Shibata K."/>
            <person name="Shiraki T."/>
            <person name="Suzuki S."/>
            <person name="Tagami M."/>
            <person name="Waki K."/>
            <person name="Watahiki A."/>
            <person name="Okamura-Oho Y."/>
            <person name="Suzuki H."/>
            <person name="Kawai J."/>
            <person name="Hayashizaki Y."/>
        </authorList>
    </citation>
    <scope>NUCLEOTIDE SEQUENCE [LARGE SCALE MRNA]</scope>
    <source>
        <strain>C57BL/6J</strain>
        <strain>DBA/2J</strain>
        <tissue>Lung</tissue>
        <tissue>Placenta</tissue>
    </source>
</reference>
<reference key="5">
    <citation type="journal article" date="2004" name="Genome Res.">
        <title>The status, quality, and expansion of the NIH full-length cDNA project: the Mammalian Gene Collection (MGC).</title>
        <authorList>
            <consortium name="The MGC Project Team"/>
        </authorList>
    </citation>
    <scope>NUCLEOTIDE SEQUENCE [LARGE SCALE MRNA]</scope>
</reference>
<reference key="6">
    <citation type="journal article" date="2007" name="J. Biol. Chem.">
        <title>TRB3 inhibits the transcriptional activation of stress-regulated genes by a negative feedback on the ATF4 pathway.</title>
        <authorList>
            <person name="Jousse C."/>
            <person name="Deval C."/>
            <person name="Maurin A.C."/>
            <person name="Parry L."/>
            <person name="Cherasse Y."/>
            <person name="Chaveroux C."/>
            <person name="Lefloch R."/>
            <person name="Lenormand P."/>
            <person name="Bruhat A."/>
            <person name="Fafournoux P."/>
        </authorList>
    </citation>
    <scope>FUNCTION</scope>
    <scope>INTERACTION WITH ATF4</scope>
    <scope>INDUCTION</scope>
</reference>
<reference key="7">
    <citation type="journal article" date="2012" name="J. Biol. Chem.">
        <title>Human Tribbles 3 protects nuclear DNA from cytidine deamination by APOBEC3A.</title>
        <authorList>
            <person name="Aynaud M.M."/>
            <person name="Suspene R."/>
            <person name="Vidalain P.O."/>
            <person name="Mussil B."/>
            <person name="Guetard D."/>
            <person name="Tangy F."/>
            <person name="Wain-Hobson S."/>
            <person name="Vartanian J.P."/>
        </authorList>
    </citation>
    <scope>FUNCTION</scope>
    <scope>INTERACTION WITH APOBEC3A</scope>
    <scope>SUBCELLULAR LOCATION</scope>
</reference>
<keyword id="KW-0053">Apoptosis</keyword>
<keyword id="KW-0539">Nucleus</keyword>
<keyword id="KW-0649">Protein kinase inhibitor</keyword>
<keyword id="KW-1185">Reference proteome</keyword>
<keyword id="KW-0804">Transcription</keyword>
<keyword id="KW-0805">Transcription regulation</keyword>
<protein>
    <recommendedName>
        <fullName>Tribbles homolog 3</fullName>
        <shortName>TRB-3</shortName>
    </recommendedName>
    <alternativeName>
        <fullName>Neuronal cell death-inducible putative kinase</fullName>
    </alternativeName>
</protein>
<feature type="chain" id="PRO_0000131867" description="Tribbles homolog 3">
    <location>
        <begin position="1"/>
        <end position="354"/>
    </location>
</feature>
<feature type="domain" description="Protein kinase" evidence="3">
    <location>
        <begin position="68"/>
        <end position="315"/>
    </location>
</feature>
<feature type="region of interest" description="Interaction with DDIT3/CHOP" evidence="1">
    <location>
        <begin position="1"/>
        <end position="127"/>
    </location>
</feature>
<feature type="region of interest" description="Disordered" evidence="4">
    <location>
        <begin position="36"/>
        <end position="61"/>
    </location>
</feature>
<feature type="region of interest" description="Disordered" evidence="4">
    <location>
        <begin position="320"/>
        <end position="354"/>
    </location>
</feature>
<feature type="compositionally biased region" description="Pro residues" evidence="4">
    <location>
        <begin position="41"/>
        <end position="55"/>
    </location>
</feature>
<feature type="compositionally biased region" description="Basic and acidic residues" evidence="4">
    <location>
        <begin position="320"/>
        <end position="333"/>
    </location>
</feature>
<feature type="compositionally biased region" description="Acidic residues" evidence="4">
    <location>
        <begin position="341"/>
        <end position="354"/>
    </location>
</feature>
<feature type="sequence conflict" description="In Ref. 5; AAH12955." evidence="9" ref="5">
    <original>S</original>
    <variation>P</variation>
    <location>
        <position position="157"/>
    </location>
</feature>
<feature type="sequence conflict" description="In Ref. 3; AAM45476." evidence="9" ref="3">
    <original>K</original>
    <variation>T</variation>
    <location>
        <position position="219"/>
    </location>
</feature>
<feature type="sequence conflict" description="In Ref. 5." evidence="9" ref="5">
    <location>
        <begin position="239"/>
        <end position="264"/>
    </location>
</feature>
<feature type="sequence conflict" description="In Ref. 4; BAC41002." evidence="9" ref="4">
    <original>SERLVALGILLHPWLREDHGRVSPPQSDRREMDQVVPDGPQLEEAEEGEVGLYG</original>
    <variation>CRATCGPGNPLASLVERGSRPSLSSTV</variation>
    <location>
        <begin position="301"/>
        <end position="354"/>
    </location>
</feature>
<evidence type="ECO:0000250" key="1"/>
<evidence type="ECO:0000250" key="2">
    <source>
        <dbReference type="UniProtKB" id="Q96RU7"/>
    </source>
</evidence>
<evidence type="ECO:0000255" key="3">
    <source>
        <dbReference type="PROSITE-ProRule" id="PRU00159"/>
    </source>
</evidence>
<evidence type="ECO:0000256" key="4">
    <source>
        <dbReference type="SAM" id="MobiDB-lite"/>
    </source>
</evidence>
<evidence type="ECO:0000269" key="5">
    <source>
    </source>
</evidence>
<evidence type="ECO:0000269" key="6">
    <source>
    </source>
</evidence>
<evidence type="ECO:0000269" key="7">
    <source>
    </source>
</evidence>
<evidence type="ECO:0000269" key="8">
    <source>
    </source>
</evidence>
<evidence type="ECO:0000305" key="9"/>
<gene>
    <name type="primary">Trib3</name>
    <name type="synonym">Nipk</name>
    <name type="synonym">Trb3</name>
</gene>
<proteinExistence type="evidence at protein level"/>
<accession>Q8K4K2</accession>
<accession>Q3UMQ0</accession>
<accession>Q921E7</accession>
<organism>
    <name type="scientific">Mus musculus</name>
    <name type="common">Mouse</name>
    <dbReference type="NCBI Taxonomy" id="10090"/>
    <lineage>
        <taxon>Eukaryota</taxon>
        <taxon>Metazoa</taxon>
        <taxon>Chordata</taxon>
        <taxon>Craniata</taxon>
        <taxon>Vertebrata</taxon>
        <taxon>Euteleostomi</taxon>
        <taxon>Mammalia</taxon>
        <taxon>Eutheria</taxon>
        <taxon>Euarchontoglires</taxon>
        <taxon>Glires</taxon>
        <taxon>Rodentia</taxon>
        <taxon>Myomorpha</taxon>
        <taxon>Muroidea</taxon>
        <taxon>Muridae</taxon>
        <taxon>Murinae</taxon>
        <taxon>Mus</taxon>
        <taxon>Mus</taxon>
    </lineage>
</organism>
<dbReference type="EMBL" id="AJ514260">
    <property type="protein sequence ID" value="CAD55728.1"/>
    <property type="molecule type" value="mRNA"/>
</dbReference>
<dbReference type="EMBL" id="AF358868">
    <property type="protein sequence ID" value="AAM45476.1"/>
    <property type="molecule type" value="mRNA"/>
</dbReference>
<dbReference type="EMBL" id="AK089931">
    <property type="protein sequence ID" value="BAC41002.1"/>
    <property type="molecule type" value="mRNA"/>
</dbReference>
<dbReference type="EMBL" id="AK132257">
    <property type="protein sequence ID" value="BAE21062.1"/>
    <property type="molecule type" value="mRNA"/>
</dbReference>
<dbReference type="EMBL" id="AK144752">
    <property type="protein sequence ID" value="BAE26048.1"/>
    <property type="molecule type" value="mRNA"/>
</dbReference>
<dbReference type="EMBL" id="AK146340">
    <property type="protein sequence ID" value="BAE27094.1"/>
    <property type="molecule type" value="mRNA"/>
</dbReference>
<dbReference type="EMBL" id="AK159760">
    <property type="protein sequence ID" value="BAE35351.1"/>
    <property type="molecule type" value="mRNA"/>
</dbReference>
<dbReference type="EMBL" id="BC012955">
    <property type="protein sequence ID" value="AAH12955.1"/>
    <property type="molecule type" value="mRNA"/>
</dbReference>
<dbReference type="CCDS" id="CCDS16881.1"/>
<dbReference type="RefSeq" id="NP_780302.2">
    <property type="nucleotide sequence ID" value="NM_175093.2"/>
</dbReference>
<dbReference type="SMR" id="Q8K4K2"/>
<dbReference type="BioGRID" id="230766">
    <property type="interactions" value="17"/>
</dbReference>
<dbReference type="DIP" id="DIP-31533N"/>
<dbReference type="FunCoup" id="Q8K4K2">
    <property type="interactions" value="1193"/>
</dbReference>
<dbReference type="IntAct" id="Q8K4K2">
    <property type="interactions" value="3"/>
</dbReference>
<dbReference type="STRING" id="10090.ENSMUSP00000041747"/>
<dbReference type="iPTMnet" id="Q8K4K2"/>
<dbReference type="PhosphoSitePlus" id="Q8K4K2"/>
<dbReference type="PaxDb" id="10090-ENSMUSP00000041747"/>
<dbReference type="Antibodypedia" id="6154">
    <property type="antibodies" value="596 antibodies from 34 providers"/>
</dbReference>
<dbReference type="DNASU" id="228775"/>
<dbReference type="Ensembl" id="ENSMUST00000040312.7">
    <property type="protein sequence ID" value="ENSMUSP00000041747.7"/>
    <property type="gene ID" value="ENSMUSG00000032715.10"/>
</dbReference>
<dbReference type="GeneID" id="228775"/>
<dbReference type="KEGG" id="mmu:228775"/>
<dbReference type="UCSC" id="uc008nff.1">
    <property type="organism name" value="mouse"/>
</dbReference>
<dbReference type="AGR" id="MGI:1345675"/>
<dbReference type="CTD" id="57761"/>
<dbReference type="MGI" id="MGI:1345675">
    <property type="gene designation" value="Trib3"/>
</dbReference>
<dbReference type="VEuPathDB" id="HostDB:ENSMUSG00000032715"/>
<dbReference type="eggNOG" id="KOG0583">
    <property type="taxonomic scope" value="Eukaryota"/>
</dbReference>
<dbReference type="GeneTree" id="ENSGT00950000182986"/>
<dbReference type="HOGENOM" id="CLU_000288_13_1_1"/>
<dbReference type="InParanoid" id="Q8K4K2"/>
<dbReference type="OMA" id="CPTRKQA"/>
<dbReference type="OrthoDB" id="410920at2759"/>
<dbReference type="PhylomeDB" id="Q8K4K2"/>
<dbReference type="TreeFam" id="TF329785"/>
<dbReference type="Reactome" id="R-MMU-1257604">
    <property type="pathway name" value="PIP3 activates AKT signaling"/>
</dbReference>
<dbReference type="Reactome" id="R-MMU-165158">
    <property type="pathway name" value="Activation of AKT2"/>
</dbReference>
<dbReference type="Reactome" id="R-MMU-199418">
    <property type="pathway name" value="Negative regulation of the PI3K/AKT network"/>
</dbReference>
<dbReference type="Reactome" id="R-MMU-389357">
    <property type="pathway name" value="CD28 dependent PI3K/Akt signaling"/>
</dbReference>
<dbReference type="Reactome" id="R-MMU-5218920">
    <property type="pathway name" value="VEGFR2 mediated vascular permeability"/>
</dbReference>
<dbReference type="BioGRID-ORCS" id="228775">
    <property type="hits" value="8 hits in 80 CRISPR screens"/>
</dbReference>
<dbReference type="ChiTaRS" id="Trib3">
    <property type="organism name" value="mouse"/>
</dbReference>
<dbReference type="PRO" id="PR:Q8K4K2"/>
<dbReference type="Proteomes" id="UP000000589">
    <property type="component" value="Chromosome 2"/>
</dbReference>
<dbReference type="RNAct" id="Q8K4K2">
    <property type="molecule type" value="protein"/>
</dbReference>
<dbReference type="Bgee" id="ENSMUSG00000032715">
    <property type="expression patterns" value="Expressed in lumbar dorsal root ganglion and 143 other cell types or tissues"/>
</dbReference>
<dbReference type="GO" id="GO:0005654">
    <property type="term" value="C:nucleoplasm"/>
    <property type="evidence" value="ECO:0000304"/>
    <property type="project" value="Reactome"/>
</dbReference>
<dbReference type="GO" id="GO:0005634">
    <property type="term" value="C:nucleus"/>
    <property type="evidence" value="ECO:0000314"/>
    <property type="project" value="MGI"/>
</dbReference>
<dbReference type="GO" id="GO:0005524">
    <property type="term" value="F:ATP binding"/>
    <property type="evidence" value="ECO:0007669"/>
    <property type="project" value="InterPro"/>
</dbReference>
<dbReference type="GO" id="GO:0019899">
    <property type="term" value="F:enzyme binding"/>
    <property type="evidence" value="ECO:0000353"/>
    <property type="project" value="BHF-UCL"/>
</dbReference>
<dbReference type="GO" id="GO:0019901">
    <property type="term" value="F:protein kinase binding"/>
    <property type="evidence" value="ECO:0000353"/>
    <property type="project" value="UniProtKB"/>
</dbReference>
<dbReference type="GO" id="GO:0030291">
    <property type="term" value="F:protein serine/threonine kinase inhibitor activity"/>
    <property type="evidence" value="ECO:0007669"/>
    <property type="project" value="Ensembl"/>
</dbReference>
<dbReference type="GO" id="GO:0003714">
    <property type="term" value="F:transcription corepressor activity"/>
    <property type="evidence" value="ECO:0000314"/>
    <property type="project" value="MGI"/>
</dbReference>
<dbReference type="GO" id="GO:1990757">
    <property type="term" value="F:ubiquitin ligase activator activity"/>
    <property type="evidence" value="ECO:0000314"/>
    <property type="project" value="BHF-UCL"/>
</dbReference>
<dbReference type="GO" id="GO:0031625">
    <property type="term" value="F:ubiquitin protein ligase binding"/>
    <property type="evidence" value="ECO:0000314"/>
    <property type="project" value="BHF-UCL"/>
</dbReference>
<dbReference type="GO" id="GO:0055106">
    <property type="term" value="F:ubiquitin-protein transferase regulator activity"/>
    <property type="evidence" value="ECO:0000314"/>
    <property type="project" value="BHF-UCL"/>
</dbReference>
<dbReference type="GO" id="GO:0032869">
    <property type="term" value="P:cellular response to insulin stimulus"/>
    <property type="evidence" value="ECO:0000314"/>
    <property type="project" value="BHF-UCL"/>
</dbReference>
<dbReference type="GO" id="GO:0070059">
    <property type="term" value="P:intrinsic apoptotic signaling pathway in response to endoplasmic reticulum stress"/>
    <property type="evidence" value="ECO:0000250"/>
    <property type="project" value="UniProtKB"/>
</dbReference>
<dbReference type="GO" id="GO:0045892">
    <property type="term" value="P:negative regulation of DNA-templated transcription"/>
    <property type="evidence" value="ECO:0000250"/>
    <property type="project" value="UniProtKB"/>
</dbReference>
<dbReference type="GO" id="GO:0045599">
    <property type="term" value="P:negative regulation of fat cell differentiation"/>
    <property type="evidence" value="ECO:0000315"/>
    <property type="project" value="BHF-UCL"/>
</dbReference>
<dbReference type="GO" id="GO:0045717">
    <property type="term" value="P:negative regulation of fatty acid biosynthetic process"/>
    <property type="evidence" value="ECO:0000315"/>
    <property type="project" value="BHF-UCL"/>
</dbReference>
<dbReference type="GO" id="GO:0046627">
    <property type="term" value="P:negative regulation of insulin receptor signaling pathway"/>
    <property type="evidence" value="ECO:0007669"/>
    <property type="project" value="Ensembl"/>
</dbReference>
<dbReference type="GO" id="GO:0043409">
    <property type="term" value="P:negative regulation of MAPK cascade"/>
    <property type="evidence" value="ECO:0007669"/>
    <property type="project" value="Ensembl"/>
</dbReference>
<dbReference type="GO" id="GO:0006469">
    <property type="term" value="P:negative regulation of protein kinase activity"/>
    <property type="evidence" value="ECO:0000314"/>
    <property type="project" value="UniProtKB"/>
</dbReference>
<dbReference type="GO" id="GO:0000122">
    <property type="term" value="P:negative regulation of transcription by RNA polymerase II"/>
    <property type="evidence" value="ECO:0007669"/>
    <property type="project" value="Ensembl"/>
</dbReference>
<dbReference type="GO" id="GO:0032436">
    <property type="term" value="P:positive regulation of proteasomal ubiquitin-dependent protein catabolic process"/>
    <property type="evidence" value="ECO:0000304"/>
    <property type="project" value="BHF-UCL"/>
</dbReference>
<dbReference type="GO" id="GO:0031398">
    <property type="term" value="P:positive regulation of protein ubiquitination"/>
    <property type="evidence" value="ECO:0000314"/>
    <property type="project" value="BHF-UCL"/>
</dbReference>
<dbReference type="GO" id="GO:0010506">
    <property type="term" value="P:regulation of autophagy"/>
    <property type="evidence" value="ECO:0000250"/>
    <property type="project" value="UniProtKB"/>
</dbReference>
<dbReference type="GO" id="GO:0010827">
    <property type="term" value="P:regulation of D-glucose transmembrane transport"/>
    <property type="evidence" value="ECO:0000314"/>
    <property type="project" value="BHF-UCL"/>
</dbReference>
<dbReference type="GO" id="GO:0043405">
    <property type="term" value="P:regulation of MAP kinase activity"/>
    <property type="evidence" value="ECO:0000250"/>
    <property type="project" value="UniProtKB"/>
</dbReference>
<dbReference type="GO" id="GO:0034976">
    <property type="term" value="P:response to endoplasmic reticulum stress"/>
    <property type="evidence" value="ECO:0000250"/>
    <property type="project" value="UniProtKB"/>
</dbReference>
<dbReference type="FunFam" id="1.10.510.10:FF:000153">
    <property type="entry name" value="Tribbles homolog 2"/>
    <property type="match status" value="1"/>
</dbReference>
<dbReference type="FunFam" id="3.30.200.20:FF:000439">
    <property type="entry name" value="Tribbles pseudokinase 3"/>
    <property type="match status" value="1"/>
</dbReference>
<dbReference type="Gene3D" id="3.30.200.20">
    <property type="entry name" value="Phosphorylase Kinase, domain 1"/>
    <property type="match status" value="1"/>
</dbReference>
<dbReference type="Gene3D" id="1.10.510.10">
    <property type="entry name" value="Transferase(Phosphotransferase) domain 1"/>
    <property type="match status" value="1"/>
</dbReference>
<dbReference type="InterPro" id="IPR011009">
    <property type="entry name" value="Kinase-like_dom_sf"/>
</dbReference>
<dbReference type="InterPro" id="IPR000719">
    <property type="entry name" value="Prot_kinase_dom"/>
</dbReference>
<dbReference type="InterPro" id="IPR024104">
    <property type="entry name" value="Tribbles/Ser_Thr_kinase_40"/>
</dbReference>
<dbReference type="PANTHER" id="PTHR22961">
    <property type="entry name" value="SER/THR PROTEIN KINASE-TRB"/>
    <property type="match status" value="1"/>
</dbReference>
<dbReference type="PANTHER" id="PTHR22961:SF14">
    <property type="entry name" value="TRIBBLES HOMOLOG 3"/>
    <property type="match status" value="1"/>
</dbReference>
<dbReference type="Pfam" id="PF00069">
    <property type="entry name" value="Pkinase"/>
    <property type="match status" value="1"/>
</dbReference>
<dbReference type="SMART" id="SM00220">
    <property type="entry name" value="S_TKc"/>
    <property type="match status" value="1"/>
</dbReference>
<dbReference type="SUPFAM" id="SSF56112">
    <property type="entry name" value="Protein kinase-like (PK-like)"/>
    <property type="match status" value="1"/>
</dbReference>
<dbReference type="PROSITE" id="PS50011">
    <property type="entry name" value="PROTEIN_KINASE_DOM"/>
    <property type="match status" value="1"/>
</dbReference>